<dbReference type="EC" id="3.2.1.14"/>
<dbReference type="EMBL" id="M29868">
    <property type="protein sequence ID" value="AAA34107.1"/>
    <property type="molecule type" value="mRNA"/>
</dbReference>
<dbReference type="EMBL" id="X51425">
    <property type="protein sequence ID" value="CAA35789.1"/>
    <property type="molecule type" value="mRNA"/>
</dbReference>
<dbReference type="PIR" id="B34801">
    <property type="entry name" value="B34801"/>
</dbReference>
<dbReference type="PIR" id="S20738">
    <property type="entry name" value="S20738"/>
</dbReference>
<dbReference type="SMR" id="P17514"/>
<dbReference type="STRING" id="4097.P17514"/>
<dbReference type="CAZy" id="GH19">
    <property type="family name" value="Glycoside Hydrolase Family 19"/>
</dbReference>
<dbReference type="PaxDb" id="4097-P17514"/>
<dbReference type="Proteomes" id="UP000084051">
    <property type="component" value="Unplaced"/>
</dbReference>
<dbReference type="GO" id="GO:0005576">
    <property type="term" value="C:extracellular region"/>
    <property type="evidence" value="ECO:0007669"/>
    <property type="project" value="UniProtKB-SubCell"/>
</dbReference>
<dbReference type="GO" id="GO:0004568">
    <property type="term" value="F:chitinase activity"/>
    <property type="evidence" value="ECO:0000318"/>
    <property type="project" value="GO_Central"/>
</dbReference>
<dbReference type="GO" id="GO:0008843">
    <property type="term" value="F:endochitinase activity"/>
    <property type="evidence" value="ECO:0007669"/>
    <property type="project" value="UniProtKB-EC"/>
</dbReference>
<dbReference type="GO" id="GO:0016998">
    <property type="term" value="P:cell wall macromolecule catabolic process"/>
    <property type="evidence" value="ECO:0007669"/>
    <property type="project" value="InterPro"/>
</dbReference>
<dbReference type="GO" id="GO:0006032">
    <property type="term" value="P:chitin catabolic process"/>
    <property type="evidence" value="ECO:0007669"/>
    <property type="project" value="UniProtKB-KW"/>
</dbReference>
<dbReference type="GO" id="GO:0050832">
    <property type="term" value="P:defense response to fungus"/>
    <property type="evidence" value="ECO:0000318"/>
    <property type="project" value="GO_Central"/>
</dbReference>
<dbReference type="GO" id="GO:0000272">
    <property type="term" value="P:polysaccharide catabolic process"/>
    <property type="evidence" value="ECO:0007669"/>
    <property type="project" value="UniProtKB-KW"/>
</dbReference>
<dbReference type="CDD" id="cd00325">
    <property type="entry name" value="chitinase_GH19"/>
    <property type="match status" value="1"/>
</dbReference>
<dbReference type="FunFam" id="3.30.20.10:FF:000002">
    <property type="entry name" value="Acidic endochitinase pcht28"/>
    <property type="match status" value="1"/>
</dbReference>
<dbReference type="Gene3D" id="1.10.530.10">
    <property type="match status" value="1"/>
</dbReference>
<dbReference type="Gene3D" id="3.30.20.10">
    <property type="entry name" value="Endochitinase, domain 2"/>
    <property type="match status" value="1"/>
</dbReference>
<dbReference type="InterPro" id="IPR016283">
    <property type="entry name" value="Glyco_hydro_19"/>
</dbReference>
<dbReference type="InterPro" id="IPR000726">
    <property type="entry name" value="Glyco_hydro_19_cat"/>
</dbReference>
<dbReference type="InterPro" id="IPR023346">
    <property type="entry name" value="Lysozyme-like_dom_sf"/>
</dbReference>
<dbReference type="PANTHER" id="PTHR22595:SF171">
    <property type="entry name" value="BASIC ENDOCHITINASE B"/>
    <property type="match status" value="1"/>
</dbReference>
<dbReference type="PANTHER" id="PTHR22595">
    <property type="entry name" value="CHITINASE-RELATED"/>
    <property type="match status" value="1"/>
</dbReference>
<dbReference type="Pfam" id="PF00182">
    <property type="entry name" value="Glyco_hydro_19"/>
    <property type="match status" value="1"/>
</dbReference>
<dbReference type="PIRSF" id="PIRSF001060">
    <property type="entry name" value="Endochitinase"/>
    <property type="match status" value="1"/>
</dbReference>
<dbReference type="SUPFAM" id="SSF53955">
    <property type="entry name" value="Lysozyme-like"/>
    <property type="match status" value="1"/>
</dbReference>
<dbReference type="PROSITE" id="PS00773">
    <property type="entry name" value="CHITINASE_19_1"/>
    <property type="match status" value="1"/>
</dbReference>
<dbReference type="PROSITE" id="PS00774">
    <property type="entry name" value="CHITINASE_19_2"/>
    <property type="match status" value="1"/>
</dbReference>
<keyword id="KW-0119">Carbohydrate metabolism</keyword>
<keyword id="KW-0146">Chitin degradation</keyword>
<keyword id="KW-0903">Direct protein sequencing</keyword>
<keyword id="KW-1015">Disulfide bond</keyword>
<keyword id="KW-0326">Glycosidase</keyword>
<keyword id="KW-0378">Hydrolase</keyword>
<keyword id="KW-0568">Pathogenesis-related protein</keyword>
<keyword id="KW-0611">Plant defense</keyword>
<keyword id="KW-0624">Polysaccharide degradation</keyword>
<keyword id="KW-1185">Reference proteome</keyword>
<keyword id="KW-0964">Secreted</keyword>
<keyword id="KW-0732">Signal</keyword>
<evidence type="ECO:0000250" key="1"/>
<evidence type="ECO:0000250" key="2">
    <source>
        <dbReference type="UniProtKB" id="P29022"/>
    </source>
</evidence>
<evidence type="ECO:0000305" key="3"/>
<reference key="1">
    <citation type="journal article" date="1990" name="Proc. Natl. Acad. Sci. U.S.A.">
        <title>Isolation of complementary DNA clones encoding pathogenesis-related proteins P and Q, two acidic chitinases from tobacco.</title>
        <authorList>
            <person name="Payne G."/>
            <person name="Ahl P."/>
            <person name="Moyer M."/>
            <person name="Harper A."/>
            <person name="Beck J."/>
            <person name="Meins F. Jr."/>
            <person name="Ryals J."/>
        </authorList>
    </citation>
    <scope>NUCLEOTIDE SEQUENCE [MRNA]</scope>
    <scope>PARTIAL PROTEIN SEQUENCE</scope>
    <source>
        <strain>cv. Xanthi NC</strain>
    </source>
</reference>
<reference key="2">
    <citation type="journal article" date="1990" name="Mol. Plant Microbe Interact.">
        <title>Analysis of acidic and basic chitinases from tobacco and petunia and their constitutive expression in transgenic tobacco.</title>
        <authorList>
            <person name="Linthorst H.J.M."/>
            <person name="van Loon L.C."/>
            <person name="van Rossum C.M.A."/>
            <person name="Mayer A."/>
            <person name="Bol J.F."/>
            <person name="van Roekel J."/>
            <person name="Meulenhof J."/>
            <person name="Conelissen B.J.C."/>
        </authorList>
    </citation>
    <scope>NUCLEOTIDE SEQUENCE [MRNA]</scope>
    <source>
        <strain>cv. Samsun</strain>
        <tissue>Leaf</tissue>
    </source>
</reference>
<protein>
    <recommendedName>
        <fullName>Acidic endochitinase Q</fullName>
        <ecNumber>3.2.1.14</ecNumber>
    </recommendedName>
    <alternativeName>
        <fullName>Pathogenesis-related protein Q</fullName>
        <shortName>PR-Q</shortName>
    </alternativeName>
</protein>
<organism>
    <name type="scientific">Nicotiana tabacum</name>
    <name type="common">Common tobacco</name>
    <dbReference type="NCBI Taxonomy" id="4097"/>
    <lineage>
        <taxon>Eukaryota</taxon>
        <taxon>Viridiplantae</taxon>
        <taxon>Streptophyta</taxon>
        <taxon>Embryophyta</taxon>
        <taxon>Tracheophyta</taxon>
        <taxon>Spermatophyta</taxon>
        <taxon>Magnoliopsida</taxon>
        <taxon>eudicotyledons</taxon>
        <taxon>Gunneridae</taxon>
        <taxon>Pentapetalae</taxon>
        <taxon>asterids</taxon>
        <taxon>lamiids</taxon>
        <taxon>Solanales</taxon>
        <taxon>Solanaceae</taxon>
        <taxon>Nicotianoideae</taxon>
        <taxon>Nicotianeae</taxon>
        <taxon>Nicotiana</taxon>
    </lineage>
</organism>
<proteinExistence type="evidence at protein level"/>
<comment type="function">
    <text>Defense against chitin-containing fungal pathogens.</text>
</comment>
<comment type="catalytic activity">
    <reaction>
        <text>Random endo-hydrolysis of N-acetyl-beta-D-glucosaminide (1-&gt;4)-beta-linkages in chitin and chitodextrins.</text>
        <dbReference type="EC" id="3.2.1.14"/>
    </reaction>
</comment>
<comment type="subcellular location">
    <subcellularLocation>
        <location>Secreted</location>
    </subcellularLocation>
    <text>Extracellular fluid from leaves.</text>
</comment>
<comment type="induction">
    <text>By TMV infection.</text>
</comment>
<comment type="similarity">
    <text evidence="3">Belongs to the glycosyl hydrolase 19 family. Chitinase class I subfamily.</text>
</comment>
<feature type="signal peptide">
    <location>
        <begin position="1"/>
        <end position="24"/>
    </location>
</feature>
<feature type="chain" id="PRO_0000005337" description="Acidic endochitinase Q">
    <location>
        <begin position="25"/>
        <end position="253"/>
    </location>
</feature>
<feature type="active site" description="Proton donor" evidence="2">
    <location>
        <position position="92"/>
    </location>
</feature>
<feature type="disulfide bond" evidence="1">
    <location>
        <begin position="212"/>
        <end position="244"/>
    </location>
</feature>
<feature type="sequence variant" description="In strain: cv. Samsun.">
    <original>Y</original>
    <variation>F</variation>
    <location>
        <position position="54"/>
    </location>
</feature>
<sequence>MEFSGSPMALFCCVFFLFLTGSLAQGIGSIVTSDLFNEMLKNRNDGRCPANGFYTYDAFIAAANSFPGFGTTGDDTARRKEIAAFFGQTSHETTGGSLSAEPFTGGYCFVRQNDQSDRYYGRGPIQLTNRNNYEKAGTAIGQELVNNPDLVATDATISFKTAIWFWMTPQDNKPSSHDVIIGRWTPSAADQAANRVPGYGVITNIINGGIECGIGRNDAVEDRIGYYRRYCGMLNVAPGENLDCYNQRNFGQG</sequence>
<accession>P17514</accession>
<name>CHIQ_TOBAC</name>